<feature type="chain" id="PRO_1000072994" description="tRNA (guanine-N(7)-)-methyltransferase">
    <location>
        <begin position="1"/>
        <end position="252"/>
    </location>
</feature>
<feature type="active site" evidence="1">
    <location>
        <position position="155"/>
    </location>
</feature>
<feature type="binding site" evidence="2">
    <location>
        <position position="80"/>
    </location>
    <ligand>
        <name>S-adenosyl-L-methionine</name>
        <dbReference type="ChEBI" id="CHEBI:59789"/>
    </ligand>
</feature>
<feature type="binding site" evidence="2">
    <location>
        <position position="105"/>
    </location>
    <ligand>
        <name>S-adenosyl-L-methionine</name>
        <dbReference type="ChEBI" id="CHEBI:59789"/>
    </ligand>
</feature>
<feature type="binding site" evidence="2">
    <location>
        <position position="132"/>
    </location>
    <ligand>
        <name>S-adenosyl-L-methionine</name>
        <dbReference type="ChEBI" id="CHEBI:59789"/>
    </ligand>
</feature>
<feature type="binding site" evidence="2">
    <location>
        <position position="155"/>
    </location>
    <ligand>
        <name>S-adenosyl-L-methionine</name>
        <dbReference type="ChEBI" id="CHEBI:59789"/>
    </ligand>
</feature>
<feature type="binding site" evidence="2">
    <location>
        <position position="159"/>
    </location>
    <ligand>
        <name>substrate</name>
    </ligand>
</feature>
<feature type="binding site" evidence="2">
    <location>
        <position position="191"/>
    </location>
    <ligand>
        <name>substrate</name>
    </ligand>
</feature>
<feature type="binding site" evidence="2">
    <location>
        <begin position="231"/>
        <end position="234"/>
    </location>
    <ligand>
        <name>substrate</name>
    </ligand>
</feature>
<gene>
    <name evidence="2" type="primary">trmB</name>
    <name type="ordered locus">Asuc_0539</name>
</gene>
<keyword id="KW-0489">Methyltransferase</keyword>
<keyword id="KW-1185">Reference proteome</keyword>
<keyword id="KW-0949">S-adenosyl-L-methionine</keyword>
<keyword id="KW-0808">Transferase</keyword>
<keyword id="KW-0819">tRNA processing</keyword>
<accession>A6VLR7</accession>
<dbReference type="EC" id="2.1.1.33" evidence="2"/>
<dbReference type="EMBL" id="CP000746">
    <property type="protein sequence ID" value="ABR73914.1"/>
    <property type="molecule type" value="Genomic_DNA"/>
</dbReference>
<dbReference type="RefSeq" id="WP_012072294.1">
    <property type="nucleotide sequence ID" value="NC_009655.1"/>
</dbReference>
<dbReference type="SMR" id="A6VLR7"/>
<dbReference type="STRING" id="339671.Asuc_0539"/>
<dbReference type="KEGG" id="asu:Asuc_0539"/>
<dbReference type="eggNOG" id="COG0220">
    <property type="taxonomic scope" value="Bacteria"/>
</dbReference>
<dbReference type="HOGENOM" id="CLU_050910_0_1_6"/>
<dbReference type="OrthoDB" id="9802090at2"/>
<dbReference type="UniPathway" id="UPA00989"/>
<dbReference type="Proteomes" id="UP000001114">
    <property type="component" value="Chromosome"/>
</dbReference>
<dbReference type="GO" id="GO:0043527">
    <property type="term" value="C:tRNA methyltransferase complex"/>
    <property type="evidence" value="ECO:0007669"/>
    <property type="project" value="TreeGrafter"/>
</dbReference>
<dbReference type="GO" id="GO:0008176">
    <property type="term" value="F:tRNA (guanine(46)-N7)-methyltransferase activity"/>
    <property type="evidence" value="ECO:0007669"/>
    <property type="project" value="UniProtKB-UniRule"/>
</dbReference>
<dbReference type="FunFam" id="3.40.50.150:FF:000035">
    <property type="entry name" value="tRNA (guanine-N(7)-)-methyltransferase"/>
    <property type="match status" value="1"/>
</dbReference>
<dbReference type="Gene3D" id="3.40.50.150">
    <property type="entry name" value="Vaccinia Virus protein VP39"/>
    <property type="match status" value="1"/>
</dbReference>
<dbReference type="HAMAP" id="MF_01057">
    <property type="entry name" value="tRNA_methyltr_TrmB"/>
    <property type="match status" value="1"/>
</dbReference>
<dbReference type="InterPro" id="IPR029063">
    <property type="entry name" value="SAM-dependent_MTases_sf"/>
</dbReference>
<dbReference type="InterPro" id="IPR003358">
    <property type="entry name" value="tRNA_(Gua-N-7)_MeTrfase_Trmb"/>
</dbReference>
<dbReference type="InterPro" id="IPR055361">
    <property type="entry name" value="tRNA_methyltr_TrmB_bact"/>
</dbReference>
<dbReference type="NCBIfam" id="TIGR00091">
    <property type="entry name" value="tRNA (guanosine(46)-N7)-methyltransferase TrmB"/>
    <property type="match status" value="1"/>
</dbReference>
<dbReference type="PANTHER" id="PTHR23417">
    <property type="entry name" value="3-DEOXY-D-MANNO-OCTULOSONIC-ACID TRANSFERASE/TRNA GUANINE-N 7 - -METHYLTRANSFERASE"/>
    <property type="match status" value="1"/>
</dbReference>
<dbReference type="PANTHER" id="PTHR23417:SF14">
    <property type="entry name" value="PENTACOTRIPEPTIDE-REPEAT REGION OF PRORP DOMAIN-CONTAINING PROTEIN"/>
    <property type="match status" value="1"/>
</dbReference>
<dbReference type="Pfam" id="PF02390">
    <property type="entry name" value="Methyltransf_4"/>
    <property type="match status" value="1"/>
</dbReference>
<dbReference type="SUPFAM" id="SSF53335">
    <property type="entry name" value="S-adenosyl-L-methionine-dependent methyltransferases"/>
    <property type="match status" value="1"/>
</dbReference>
<dbReference type="PROSITE" id="PS51625">
    <property type="entry name" value="SAM_MT_TRMB"/>
    <property type="match status" value="1"/>
</dbReference>
<name>TRMB_ACTSZ</name>
<sequence length="252" mass="29082">MTELKKTFADQKRKTVETAEFTEDGRYKRKIRSFVLRTGRLSEYQRQMMNDNWSNYGLDYQTEPFDFPAIYGNHNPVILEIGFGMGKSLVEMAQQNPDKNYLGIEVHTPGVGACLAYALEKGIKNLRVICHDATEILRDCIADRSLGGLQLFFPDPWHKAKHHKRRIVQPQFVKTVTQKLTSGGFIHFATDWQNYAEHMLNVLQSVQSAVGIRNISETGDFIPRPDFRPLTKFEQRGQKLGHGIWDLYFIKN</sequence>
<protein>
    <recommendedName>
        <fullName evidence="2">tRNA (guanine-N(7)-)-methyltransferase</fullName>
        <ecNumber evidence="2">2.1.1.33</ecNumber>
    </recommendedName>
    <alternativeName>
        <fullName evidence="2">tRNA (guanine(46)-N(7))-methyltransferase</fullName>
    </alternativeName>
    <alternativeName>
        <fullName evidence="2">tRNA(m7G46)-methyltransferase</fullName>
    </alternativeName>
</protein>
<comment type="function">
    <text evidence="2">Catalyzes the formation of N(7)-methylguanine at position 46 (m7G46) in tRNA.</text>
</comment>
<comment type="catalytic activity">
    <reaction evidence="2">
        <text>guanosine(46) in tRNA + S-adenosyl-L-methionine = N(7)-methylguanosine(46) in tRNA + S-adenosyl-L-homocysteine</text>
        <dbReference type="Rhea" id="RHEA:42708"/>
        <dbReference type="Rhea" id="RHEA-COMP:10188"/>
        <dbReference type="Rhea" id="RHEA-COMP:10189"/>
        <dbReference type="ChEBI" id="CHEBI:57856"/>
        <dbReference type="ChEBI" id="CHEBI:59789"/>
        <dbReference type="ChEBI" id="CHEBI:74269"/>
        <dbReference type="ChEBI" id="CHEBI:74480"/>
        <dbReference type="EC" id="2.1.1.33"/>
    </reaction>
</comment>
<comment type="pathway">
    <text evidence="2">tRNA modification; N(7)-methylguanine-tRNA biosynthesis.</text>
</comment>
<comment type="similarity">
    <text evidence="2">Belongs to the class I-like SAM-binding methyltransferase superfamily. TrmB family.</text>
</comment>
<reference key="1">
    <citation type="journal article" date="2010" name="BMC Genomics">
        <title>A genomic perspective on the potential of Actinobacillus succinogenes for industrial succinate production.</title>
        <authorList>
            <person name="McKinlay J.B."/>
            <person name="Laivenieks M."/>
            <person name="Schindler B.D."/>
            <person name="McKinlay A.A."/>
            <person name="Siddaramappa S."/>
            <person name="Challacombe J.F."/>
            <person name="Lowry S.R."/>
            <person name="Clum A."/>
            <person name="Lapidus A.L."/>
            <person name="Burkhart K.B."/>
            <person name="Harkins V."/>
            <person name="Vieille C."/>
        </authorList>
    </citation>
    <scope>NUCLEOTIDE SEQUENCE [LARGE SCALE GENOMIC DNA]</scope>
    <source>
        <strain>ATCC 55618 / DSM 22257 / CCUG 43843 / 130Z</strain>
    </source>
</reference>
<organism>
    <name type="scientific">Actinobacillus succinogenes (strain ATCC 55618 / DSM 22257 / CCUG 43843 / 130Z)</name>
    <dbReference type="NCBI Taxonomy" id="339671"/>
    <lineage>
        <taxon>Bacteria</taxon>
        <taxon>Pseudomonadati</taxon>
        <taxon>Pseudomonadota</taxon>
        <taxon>Gammaproteobacteria</taxon>
        <taxon>Pasteurellales</taxon>
        <taxon>Pasteurellaceae</taxon>
        <taxon>Actinobacillus</taxon>
    </lineage>
</organism>
<proteinExistence type="inferred from homology"/>
<evidence type="ECO:0000250" key="1"/>
<evidence type="ECO:0000255" key="2">
    <source>
        <dbReference type="HAMAP-Rule" id="MF_01057"/>
    </source>
</evidence>